<reference key="1">
    <citation type="journal article" date="2011" name="PLoS Genet.">
        <title>Whole-genome comparison reveals novel genetic elements that characterize the genome of industrial strains of Saccharomyces cerevisiae.</title>
        <authorList>
            <person name="Borneman A.R."/>
            <person name="Desany B.A."/>
            <person name="Riches D."/>
            <person name="Affourtit J.P."/>
            <person name="Forgan A.H."/>
            <person name="Pretorius I.S."/>
            <person name="Egholm M."/>
            <person name="Chambers P.J."/>
        </authorList>
    </citation>
    <scope>NUCLEOTIDE SEQUENCE [LARGE SCALE GENOMIC DNA]</scope>
    <source>
        <strain>Lalvin QA23</strain>
    </source>
</reference>
<proteinExistence type="inferred from homology"/>
<keyword id="KW-0963">Cytoplasm</keyword>
<keyword id="KW-0539">Nucleus</keyword>
<keyword id="KW-0653">Protein transport</keyword>
<keyword id="KW-0813">Transport</keyword>
<evidence type="ECO:0000250" key="1"/>
<evidence type="ECO:0000256" key="2">
    <source>
        <dbReference type="SAM" id="MobiDB-lite"/>
    </source>
</evidence>
<evidence type="ECO:0000305" key="3"/>
<gene>
    <name type="primary">STS1</name>
    <name type="synonym">DBF8</name>
    <name type="synonym">SSM5</name>
    <name type="ORF">QA23_2417</name>
</gene>
<accession>E7KPZ3</accession>
<feature type="chain" id="PRO_0000409441" description="Tethering factor for nuclear proteasome STS1">
    <location>
        <begin position="1"/>
        <end position="318"/>
    </location>
</feature>
<feature type="region of interest" description="Disordered" evidence="2">
    <location>
        <begin position="1"/>
        <end position="75"/>
    </location>
</feature>
<feature type="compositionally biased region" description="Polar residues" evidence="2">
    <location>
        <begin position="11"/>
        <end position="24"/>
    </location>
</feature>
<protein>
    <recommendedName>
        <fullName>Tethering factor for nuclear proteasome STS1</fullName>
    </recommendedName>
    <alternativeName>
        <fullName>Dumbbell former protein 8</fullName>
    </alternativeName>
    <alternativeName>
        <fullName>SEC23 suppressor 1</fullName>
    </alternativeName>
</protein>
<name>STS1_YEASL</name>
<organism>
    <name type="scientific">Saccharomyces cerevisiae (strain Lalvin QA23)</name>
    <name type="common">Baker's yeast</name>
    <dbReference type="NCBI Taxonomy" id="764098"/>
    <lineage>
        <taxon>Eukaryota</taxon>
        <taxon>Fungi</taxon>
        <taxon>Dikarya</taxon>
        <taxon>Ascomycota</taxon>
        <taxon>Saccharomycotina</taxon>
        <taxon>Saccharomycetes</taxon>
        <taxon>Saccharomycetales</taxon>
        <taxon>Saccharomycetaceae</taxon>
        <taxon>Saccharomyces</taxon>
    </lineage>
</organism>
<dbReference type="EMBL" id="ADVV01000047">
    <property type="protein sequence ID" value="EGA82348.1"/>
    <property type="molecule type" value="Genomic_DNA"/>
</dbReference>
<dbReference type="HOGENOM" id="CLU_054606_1_0_1"/>
<dbReference type="OrthoDB" id="28232at4893"/>
<dbReference type="GO" id="GO:0005737">
    <property type="term" value="C:cytoplasm"/>
    <property type="evidence" value="ECO:0007669"/>
    <property type="project" value="UniProtKB-SubCell"/>
</dbReference>
<dbReference type="GO" id="GO:0031965">
    <property type="term" value="C:nuclear membrane"/>
    <property type="evidence" value="ECO:0007669"/>
    <property type="project" value="TreeGrafter"/>
</dbReference>
<dbReference type="GO" id="GO:0070628">
    <property type="term" value="F:proteasome binding"/>
    <property type="evidence" value="ECO:0007669"/>
    <property type="project" value="TreeGrafter"/>
</dbReference>
<dbReference type="GO" id="GO:0071630">
    <property type="term" value="P:nuclear protein quality control by the ubiquitin-proteasome system"/>
    <property type="evidence" value="ECO:0007669"/>
    <property type="project" value="InterPro"/>
</dbReference>
<dbReference type="GO" id="GO:0031144">
    <property type="term" value="P:proteasome localization"/>
    <property type="evidence" value="ECO:0007669"/>
    <property type="project" value="InterPro"/>
</dbReference>
<dbReference type="GO" id="GO:0015031">
    <property type="term" value="P:protein transport"/>
    <property type="evidence" value="ECO:0007669"/>
    <property type="project" value="UniProtKB-KW"/>
</dbReference>
<dbReference type="FunFam" id="1.20.58.1590:FF:000003">
    <property type="entry name" value="Tethering factor for nuclear proteasome STS1"/>
    <property type="match status" value="1"/>
</dbReference>
<dbReference type="Gene3D" id="1.20.58.1590">
    <property type="entry name" value="Tethering factor for nuclear proteasome Cut8/Sts1"/>
    <property type="match status" value="1"/>
</dbReference>
<dbReference type="InterPro" id="IPR013868">
    <property type="entry name" value="Cut8/Sts1_fam"/>
</dbReference>
<dbReference type="InterPro" id="IPR038422">
    <property type="entry name" value="Cut8/Sts1_sf"/>
</dbReference>
<dbReference type="PANTHER" id="PTHR28032">
    <property type="entry name" value="FI02826P"/>
    <property type="match status" value="1"/>
</dbReference>
<dbReference type="PANTHER" id="PTHR28032:SF1">
    <property type="entry name" value="FI02826P"/>
    <property type="match status" value="1"/>
</dbReference>
<dbReference type="Pfam" id="PF08559">
    <property type="entry name" value="Cut8"/>
    <property type="match status" value="1"/>
</dbReference>
<comment type="function">
    <text evidence="1">Involved in ubiquitin-mediated protein degradation. Regulatory factor in the ubiquitin/proteasome pathway that controls the turnover of proteasome substrates. Targets proteasomes to the nucleus and facilitates the degradation of nuclear proteins (By similarity).</text>
</comment>
<comment type="subunit">
    <text evidence="1">Binds the proteasome. Interacts with karyopherin SRP1 and Proteasome subunit RPN11.</text>
</comment>
<comment type="subcellular location">
    <subcellularLocation>
        <location evidence="1">Cytoplasm</location>
    </subcellularLocation>
    <subcellularLocation>
        <location evidence="1">Nucleus</location>
    </subcellularLocation>
</comment>
<comment type="similarity">
    <text evidence="3">Belongs to the cut8/STS1 family.</text>
</comment>
<sequence length="318" mass="36366">MGFEWGFKPSSKITQSTVSSQGTGNVMIPTAGVKQKRRYANEEQEEEELPRNKNVMKYGGVSKRRPQPGSLIRGQPLPLQRGMELMNKNQLQQLLVDLMTKHPEIQQSVHTRVIGLDFSIQKCLDMLKQKSEAVYQSIPYNRSYESNKLDDYAFVRMKPQILEFLNCLVDFILDNIPPRLENLHASLKFLDICTELVIKLPRFELASNNYYYDKCIEQLSHVWCTLIEHXARDRIILLADNSSVWKSHMTRLQVYNEHSNGLLERPLQLFKSLDMGSPSAASSSTLSLQESIIYHHDTMTANENNNNSGSAATDSPFN</sequence>